<sequence>MFGRGPSKKSDNTKFYEILGVPKSASPEDLKKAYKKAAIKNHPDKGGDPEKFKELAQAYEVLSDPEKREIYDQYGEDALKEGMGGGGGGHDPFDIFSSFFGGGPFGGNTSRQRRQRRGEDVVHPLKVSLEDVYLGTMKKLSLSRNALCSKCNGKGSKSGASLKCGGCQGSGMKVSIRQLGPGMIQQMQHACNECKGTGETINDRDRCPQCKGDKVIPEKKVLEVNVEKGMQHSQKITFEGQADEAPDTVTGDIVFVLQQKEHPKFKRKGEDLFVEHTLSLTEALCGFQFVLTHLDGRSLLIKSNPGEVVKPDSYKAISDEGMPIYQRPFMKGKLYIHFTVEFPDSLSPDQTKALEAVLPKPSTAQLSDMEIDECEETTLHDVNIEDEMRRKAQAQREAYDDDDEDDDHPGGAQRVQCAQQ</sequence>
<evidence type="ECO:0000250" key="1"/>
<evidence type="ECO:0000256" key="2">
    <source>
        <dbReference type="SAM" id="MobiDB-lite"/>
    </source>
</evidence>
<evidence type="ECO:0000269" key="3">
    <source ref="1"/>
</evidence>
<evidence type="ECO:0000305" key="4"/>
<accession>Q94AW8</accession>
<accession>O22663</accession>
<accession>Q42530</accession>
<gene>
    <name type="primary">ATJ3</name>
    <name type="synonym">A3</name>
    <name type="synonym">J3</name>
    <name type="ordered locus">At3g44110</name>
    <name type="ORF">F26G5.60</name>
</gene>
<protein>
    <recommendedName>
        <fullName>Chaperone protein dnaJ 3</fullName>
        <shortName>AtDjA3</shortName>
        <shortName>AtJ3</shortName>
    </recommendedName>
</protein>
<dbReference type="EMBL" id="U22340">
    <property type="protein sequence ID" value="AAB49030.1"/>
    <property type="molecule type" value="mRNA"/>
</dbReference>
<dbReference type="EMBL" id="AF032883">
    <property type="protein sequence ID" value="AAB86892.1"/>
    <property type="molecule type" value="Genomic_DNA"/>
</dbReference>
<dbReference type="EMBL" id="AL353814">
    <property type="protein sequence ID" value="CAB88419.1"/>
    <property type="molecule type" value="Genomic_DNA"/>
</dbReference>
<dbReference type="EMBL" id="CP002686">
    <property type="protein sequence ID" value="AEE77863.1"/>
    <property type="molecule type" value="Genomic_DNA"/>
</dbReference>
<dbReference type="EMBL" id="AY035087">
    <property type="protein sequence ID" value="AAK59592.1"/>
    <property type="molecule type" value="mRNA"/>
</dbReference>
<dbReference type="EMBL" id="AY045655">
    <property type="protein sequence ID" value="AAK74013.1"/>
    <property type="molecule type" value="mRNA"/>
</dbReference>
<dbReference type="EMBL" id="AY113878">
    <property type="protein sequence ID" value="AAM44926.1"/>
    <property type="molecule type" value="mRNA"/>
</dbReference>
<dbReference type="EMBL" id="AY088078">
    <property type="protein sequence ID" value="AAM65624.1"/>
    <property type="molecule type" value="mRNA"/>
</dbReference>
<dbReference type="PIR" id="S71199">
    <property type="entry name" value="S71199"/>
</dbReference>
<dbReference type="PIR" id="T49127">
    <property type="entry name" value="T49127"/>
</dbReference>
<dbReference type="RefSeq" id="NP_189997.1">
    <molecule id="Q94AW8-1"/>
    <property type="nucleotide sequence ID" value="NM_114279.4"/>
</dbReference>
<dbReference type="SMR" id="Q94AW8"/>
<dbReference type="BioGRID" id="8851">
    <property type="interactions" value="13"/>
</dbReference>
<dbReference type="FunCoup" id="Q94AW8">
    <property type="interactions" value="3935"/>
</dbReference>
<dbReference type="IntAct" id="Q94AW8">
    <property type="interactions" value="3"/>
</dbReference>
<dbReference type="STRING" id="3702.Q94AW8"/>
<dbReference type="iPTMnet" id="Q94AW8"/>
<dbReference type="PaxDb" id="3702-AT3G44110.1"/>
<dbReference type="ProteomicsDB" id="220710">
    <molecule id="Q94AW8-1"/>
</dbReference>
<dbReference type="EnsemblPlants" id="AT3G44110.1">
    <molecule id="Q94AW8-1"/>
    <property type="protein sequence ID" value="AT3G44110.1"/>
    <property type="gene ID" value="AT3G44110"/>
</dbReference>
<dbReference type="GeneID" id="823531"/>
<dbReference type="Gramene" id="AT3G44110.1">
    <molecule id="Q94AW8-1"/>
    <property type="protein sequence ID" value="AT3G44110.1"/>
    <property type="gene ID" value="AT3G44110"/>
</dbReference>
<dbReference type="KEGG" id="ath:AT3G44110"/>
<dbReference type="Araport" id="AT3G44110"/>
<dbReference type="TAIR" id="AT3G44110">
    <property type="gene designation" value="J3"/>
</dbReference>
<dbReference type="eggNOG" id="KOG0712">
    <property type="taxonomic scope" value="Eukaryota"/>
</dbReference>
<dbReference type="HOGENOM" id="CLU_017633_10_0_1"/>
<dbReference type="InParanoid" id="Q94AW8"/>
<dbReference type="OMA" id="SYEYETH"/>
<dbReference type="OrthoDB" id="550424at2759"/>
<dbReference type="PhylomeDB" id="Q94AW8"/>
<dbReference type="CD-CODE" id="4299E36E">
    <property type="entry name" value="Nucleolus"/>
</dbReference>
<dbReference type="PRO" id="PR:Q94AW8"/>
<dbReference type="Proteomes" id="UP000006548">
    <property type="component" value="Chromosome 3"/>
</dbReference>
<dbReference type="ExpressionAtlas" id="Q94AW8">
    <property type="expression patterns" value="baseline and differential"/>
</dbReference>
<dbReference type="GO" id="GO:0005829">
    <property type="term" value="C:cytosol"/>
    <property type="evidence" value="ECO:0007005"/>
    <property type="project" value="TAIR"/>
</dbReference>
<dbReference type="GO" id="GO:0005730">
    <property type="term" value="C:nucleolus"/>
    <property type="evidence" value="ECO:0007005"/>
    <property type="project" value="TAIR"/>
</dbReference>
<dbReference type="GO" id="GO:0009505">
    <property type="term" value="C:plant-type cell wall"/>
    <property type="evidence" value="ECO:0007005"/>
    <property type="project" value="TAIR"/>
</dbReference>
<dbReference type="GO" id="GO:0005886">
    <property type="term" value="C:plasma membrane"/>
    <property type="evidence" value="ECO:0000314"/>
    <property type="project" value="TAIR"/>
</dbReference>
<dbReference type="GO" id="GO:0009506">
    <property type="term" value="C:plasmodesma"/>
    <property type="evidence" value="ECO:0007005"/>
    <property type="project" value="TAIR"/>
</dbReference>
<dbReference type="GO" id="GO:0005524">
    <property type="term" value="F:ATP binding"/>
    <property type="evidence" value="ECO:0007669"/>
    <property type="project" value="InterPro"/>
</dbReference>
<dbReference type="GO" id="GO:0030544">
    <property type="term" value="F:Hsp70 protein binding"/>
    <property type="evidence" value="ECO:0007669"/>
    <property type="project" value="InterPro"/>
</dbReference>
<dbReference type="GO" id="GO:0003729">
    <property type="term" value="F:mRNA binding"/>
    <property type="evidence" value="ECO:0000314"/>
    <property type="project" value="TAIR"/>
</dbReference>
<dbReference type="GO" id="GO:0051082">
    <property type="term" value="F:unfolded protein binding"/>
    <property type="evidence" value="ECO:0007669"/>
    <property type="project" value="InterPro"/>
</dbReference>
<dbReference type="GO" id="GO:0008270">
    <property type="term" value="F:zinc ion binding"/>
    <property type="evidence" value="ECO:0007669"/>
    <property type="project" value="UniProtKB-KW"/>
</dbReference>
<dbReference type="GO" id="GO:0048573">
    <property type="term" value="P:photoperiodism, flowering"/>
    <property type="evidence" value="ECO:0000315"/>
    <property type="project" value="TAIR"/>
</dbReference>
<dbReference type="GO" id="GO:0009911">
    <property type="term" value="P:positive regulation of flower development"/>
    <property type="evidence" value="ECO:0000315"/>
    <property type="project" value="TAIR"/>
</dbReference>
<dbReference type="GO" id="GO:0006457">
    <property type="term" value="P:protein folding"/>
    <property type="evidence" value="ECO:0007669"/>
    <property type="project" value="InterPro"/>
</dbReference>
<dbReference type="GO" id="GO:0043462">
    <property type="term" value="P:regulation of ATP-dependent activity"/>
    <property type="evidence" value="ECO:0000315"/>
    <property type="project" value="TAIR"/>
</dbReference>
<dbReference type="GO" id="GO:0009408">
    <property type="term" value="P:response to heat"/>
    <property type="evidence" value="ECO:0007669"/>
    <property type="project" value="InterPro"/>
</dbReference>
<dbReference type="GO" id="GO:0009651">
    <property type="term" value="P:response to salt stress"/>
    <property type="evidence" value="ECO:0000315"/>
    <property type="project" value="TAIR"/>
</dbReference>
<dbReference type="CDD" id="cd06257">
    <property type="entry name" value="DnaJ"/>
    <property type="match status" value="1"/>
</dbReference>
<dbReference type="CDD" id="cd10747">
    <property type="entry name" value="DnaJ_C"/>
    <property type="match status" value="1"/>
</dbReference>
<dbReference type="CDD" id="cd10719">
    <property type="entry name" value="DnaJ_zf"/>
    <property type="match status" value="1"/>
</dbReference>
<dbReference type="FunFam" id="2.60.260.20:FF:000068">
    <property type="entry name" value="Chaperone protein dnaJ 3"/>
    <property type="match status" value="1"/>
</dbReference>
<dbReference type="FunFam" id="1.10.287.110:FF:000012">
    <property type="entry name" value="dnaJ protein homolog"/>
    <property type="match status" value="1"/>
</dbReference>
<dbReference type="FunFam" id="2.10.230.10:FF:000001">
    <property type="entry name" value="DnaJ subfamily A member 2"/>
    <property type="match status" value="1"/>
</dbReference>
<dbReference type="FunFam" id="2.60.260.20:FF:000003">
    <property type="entry name" value="DnaJ subfamily A member 2"/>
    <property type="match status" value="1"/>
</dbReference>
<dbReference type="Gene3D" id="1.10.287.110">
    <property type="entry name" value="DnaJ domain"/>
    <property type="match status" value="1"/>
</dbReference>
<dbReference type="Gene3D" id="2.10.230.10">
    <property type="entry name" value="Heat shock protein DnaJ, cysteine-rich domain"/>
    <property type="match status" value="1"/>
</dbReference>
<dbReference type="Gene3D" id="2.60.260.20">
    <property type="entry name" value="Urease metallochaperone UreE, N-terminal domain"/>
    <property type="match status" value="2"/>
</dbReference>
<dbReference type="HAMAP" id="MF_01152">
    <property type="entry name" value="DnaJ"/>
    <property type="match status" value="1"/>
</dbReference>
<dbReference type="InterPro" id="IPR012724">
    <property type="entry name" value="DnaJ"/>
</dbReference>
<dbReference type="InterPro" id="IPR002939">
    <property type="entry name" value="DnaJ_C"/>
</dbReference>
<dbReference type="InterPro" id="IPR001623">
    <property type="entry name" value="DnaJ_domain"/>
</dbReference>
<dbReference type="InterPro" id="IPR018253">
    <property type="entry name" value="DnaJ_domain_CS"/>
</dbReference>
<dbReference type="InterPro" id="IPR044713">
    <property type="entry name" value="DNJA1/2-like"/>
</dbReference>
<dbReference type="InterPro" id="IPR008971">
    <property type="entry name" value="HSP40/DnaJ_pept-bd"/>
</dbReference>
<dbReference type="InterPro" id="IPR001305">
    <property type="entry name" value="HSP_DnaJ_Cys-rich_dom"/>
</dbReference>
<dbReference type="InterPro" id="IPR036410">
    <property type="entry name" value="HSP_DnaJ_Cys-rich_dom_sf"/>
</dbReference>
<dbReference type="InterPro" id="IPR036869">
    <property type="entry name" value="J_dom_sf"/>
</dbReference>
<dbReference type="PANTHER" id="PTHR43888">
    <property type="entry name" value="DNAJ-LIKE-2, ISOFORM A-RELATED"/>
    <property type="match status" value="1"/>
</dbReference>
<dbReference type="Pfam" id="PF00226">
    <property type="entry name" value="DnaJ"/>
    <property type="match status" value="1"/>
</dbReference>
<dbReference type="Pfam" id="PF01556">
    <property type="entry name" value="DnaJ_C"/>
    <property type="match status" value="1"/>
</dbReference>
<dbReference type="Pfam" id="PF00684">
    <property type="entry name" value="DnaJ_CXXCXGXG"/>
    <property type="match status" value="1"/>
</dbReference>
<dbReference type="PRINTS" id="PR00625">
    <property type="entry name" value="JDOMAIN"/>
</dbReference>
<dbReference type="SMART" id="SM00271">
    <property type="entry name" value="DnaJ"/>
    <property type="match status" value="1"/>
</dbReference>
<dbReference type="SUPFAM" id="SSF46565">
    <property type="entry name" value="Chaperone J-domain"/>
    <property type="match status" value="1"/>
</dbReference>
<dbReference type="SUPFAM" id="SSF57938">
    <property type="entry name" value="DnaJ/Hsp40 cysteine-rich domain"/>
    <property type="match status" value="1"/>
</dbReference>
<dbReference type="SUPFAM" id="SSF49493">
    <property type="entry name" value="HSP40/DnaJ peptide-binding domain"/>
    <property type="match status" value="2"/>
</dbReference>
<dbReference type="PROSITE" id="PS00636">
    <property type="entry name" value="DNAJ_1"/>
    <property type="match status" value="1"/>
</dbReference>
<dbReference type="PROSITE" id="PS50076">
    <property type="entry name" value="DNAJ_2"/>
    <property type="match status" value="1"/>
</dbReference>
<dbReference type="PROSITE" id="PS51188">
    <property type="entry name" value="ZF_CR"/>
    <property type="match status" value="1"/>
</dbReference>
<organism>
    <name type="scientific">Arabidopsis thaliana</name>
    <name type="common">Mouse-ear cress</name>
    <dbReference type="NCBI Taxonomy" id="3702"/>
    <lineage>
        <taxon>Eukaryota</taxon>
        <taxon>Viridiplantae</taxon>
        <taxon>Streptophyta</taxon>
        <taxon>Embryophyta</taxon>
        <taxon>Tracheophyta</taxon>
        <taxon>Spermatophyta</taxon>
        <taxon>Magnoliopsida</taxon>
        <taxon>eudicotyledons</taxon>
        <taxon>Gunneridae</taxon>
        <taxon>Pentapetalae</taxon>
        <taxon>rosids</taxon>
        <taxon>malvids</taxon>
        <taxon>Brassicales</taxon>
        <taxon>Brassicaceae</taxon>
        <taxon>Camelineae</taxon>
        <taxon>Arabidopsis</taxon>
    </lineage>
</organism>
<reference key="1">
    <citation type="online journal article" date="1999" name="Plant Gene Register">
        <title>AtJ3, an Arabidopsis thaliana J-protein homologous to Saccharomyces cerevisiae YDJ1p.</title>
        <authorList>
            <person name="Zhou R."/>
            <person name="Kroczyska B."/>
            <person name="Miernyk J.A."/>
        </authorList>
        <locator>PGR99-162</locator>
    </citation>
    <scope>NUCLEOTIDE SEQUENCE [MRNA]</scope>
    <scope>INDUCTION</scope>
    <scope>TISSUE SPECIFICITY</scope>
    <source>
        <strain>cv. Columbia</strain>
    </source>
</reference>
<reference key="2">
    <citation type="online journal article" date="2000" name="Plant Gene Register">
        <title>The genomic sequence encoding the Arabidopsis thaliana molecular chaperone AtJ3.</title>
        <authorList>
            <person name="Zhou R."/>
            <person name="Kroczynska B."/>
            <person name="Miernyk J.A."/>
        </authorList>
        <locator>PGR00-003</locator>
    </citation>
    <scope>NUCLEOTIDE SEQUENCE [GENOMIC DNA]</scope>
    <source>
        <strain>cv. Columbia</strain>
    </source>
</reference>
<reference key="3">
    <citation type="journal article" date="2000" name="Nature">
        <title>Sequence and analysis of chromosome 3 of the plant Arabidopsis thaliana.</title>
        <authorList>
            <person name="Salanoubat M."/>
            <person name="Lemcke K."/>
            <person name="Rieger M."/>
            <person name="Ansorge W."/>
            <person name="Unseld M."/>
            <person name="Fartmann B."/>
            <person name="Valle G."/>
            <person name="Bloecker H."/>
            <person name="Perez-Alonso M."/>
            <person name="Obermaier B."/>
            <person name="Delseny M."/>
            <person name="Boutry M."/>
            <person name="Grivell L.A."/>
            <person name="Mache R."/>
            <person name="Puigdomenech P."/>
            <person name="De Simone V."/>
            <person name="Choisne N."/>
            <person name="Artiguenave F."/>
            <person name="Robert C."/>
            <person name="Brottier P."/>
            <person name="Wincker P."/>
            <person name="Cattolico L."/>
            <person name="Weissenbach J."/>
            <person name="Saurin W."/>
            <person name="Quetier F."/>
            <person name="Schaefer M."/>
            <person name="Mueller-Auer S."/>
            <person name="Gabel C."/>
            <person name="Fuchs M."/>
            <person name="Benes V."/>
            <person name="Wurmbach E."/>
            <person name="Drzonek H."/>
            <person name="Erfle H."/>
            <person name="Jordan N."/>
            <person name="Bangert S."/>
            <person name="Wiedelmann R."/>
            <person name="Kranz H."/>
            <person name="Voss H."/>
            <person name="Holland R."/>
            <person name="Brandt P."/>
            <person name="Nyakatura G."/>
            <person name="Vezzi A."/>
            <person name="D'Angelo M."/>
            <person name="Pallavicini A."/>
            <person name="Toppo S."/>
            <person name="Simionati B."/>
            <person name="Conrad A."/>
            <person name="Hornischer K."/>
            <person name="Kauer G."/>
            <person name="Loehnert T.-H."/>
            <person name="Nordsiek G."/>
            <person name="Reichelt J."/>
            <person name="Scharfe M."/>
            <person name="Schoen O."/>
            <person name="Bargues M."/>
            <person name="Terol J."/>
            <person name="Climent J."/>
            <person name="Navarro P."/>
            <person name="Collado C."/>
            <person name="Perez-Perez A."/>
            <person name="Ottenwaelder B."/>
            <person name="Duchemin D."/>
            <person name="Cooke R."/>
            <person name="Laudie M."/>
            <person name="Berger-Llauro C."/>
            <person name="Purnelle B."/>
            <person name="Masuy D."/>
            <person name="de Haan M."/>
            <person name="Maarse A.C."/>
            <person name="Alcaraz J.-P."/>
            <person name="Cottet A."/>
            <person name="Casacuberta E."/>
            <person name="Monfort A."/>
            <person name="Argiriou A."/>
            <person name="Flores M."/>
            <person name="Liguori R."/>
            <person name="Vitale D."/>
            <person name="Mannhaupt G."/>
            <person name="Haase D."/>
            <person name="Schoof H."/>
            <person name="Rudd S."/>
            <person name="Zaccaria P."/>
            <person name="Mewes H.-W."/>
            <person name="Mayer K.F.X."/>
            <person name="Kaul S."/>
            <person name="Town C.D."/>
            <person name="Koo H.L."/>
            <person name="Tallon L.J."/>
            <person name="Jenkins J."/>
            <person name="Rooney T."/>
            <person name="Rizzo M."/>
            <person name="Walts A."/>
            <person name="Utterback T."/>
            <person name="Fujii C.Y."/>
            <person name="Shea T.P."/>
            <person name="Creasy T.H."/>
            <person name="Haas B."/>
            <person name="Maiti R."/>
            <person name="Wu D."/>
            <person name="Peterson J."/>
            <person name="Van Aken S."/>
            <person name="Pai G."/>
            <person name="Militscher J."/>
            <person name="Sellers P."/>
            <person name="Gill J.E."/>
            <person name="Feldblyum T.V."/>
            <person name="Preuss D."/>
            <person name="Lin X."/>
            <person name="Nierman W.C."/>
            <person name="Salzberg S.L."/>
            <person name="White O."/>
            <person name="Venter J.C."/>
            <person name="Fraser C.M."/>
            <person name="Kaneko T."/>
            <person name="Nakamura Y."/>
            <person name="Sato S."/>
            <person name="Kato T."/>
            <person name="Asamizu E."/>
            <person name="Sasamoto S."/>
            <person name="Kimura T."/>
            <person name="Idesawa K."/>
            <person name="Kawashima K."/>
            <person name="Kishida Y."/>
            <person name="Kiyokawa C."/>
            <person name="Kohara M."/>
            <person name="Matsumoto M."/>
            <person name="Matsuno A."/>
            <person name="Muraki A."/>
            <person name="Nakayama S."/>
            <person name="Nakazaki N."/>
            <person name="Shinpo S."/>
            <person name="Takeuchi C."/>
            <person name="Wada T."/>
            <person name="Watanabe A."/>
            <person name="Yamada M."/>
            <person name="Yasuda M."/>
            <person name="Tabata S."/>
        </authorList>
    </citation>
    <scope>NUCLEOTIDE SEQUENCE [LARGE SCALE GENOMIC DNA]</scope>
    <source>
        <strain>cv. Columbia</strain>
    </source>
</reference>
<reference key="4">
    <citation type="journal article" date="2017" name="Plant J.">
        <title>Araport11: a complete reannotation of the Arabidopsis thaliana reference genome.</title>
        <authorList>
            <person name="Cheng C.Y."/>
            <person name="Krishnakumar V."/>
            <person name="Chan A.P."/>
            <person name="Thibaud-Nissen F."/>
            <person name="Schobel S."/>
            <person name="Town C.D."/>
        </authorList>
    </citation>
    <scope>GENOME REANNOTATION</scope>
    <source>
        <strain>cv. Columbia</strain>
    </source>
</reference>
<reference key="5">
    <citation type="journal article" date="2003" name="Science">
        <title>Empirical analysis of transcriptional activity in the Arabidopsis genome.</title>
        <authorList>
            <person name="Yamada K."/>
            <person name="Lim J."/>
            <person name="Dale J.M."/>
            <person name="Chen H."/>
            <person name="Shinn P."/>
            <person name="Palm C.J."/>
            <person name="Southwick A.M."/>
            <person name="Wu H.C."/>
            <person name="Kim C.J."/>
            <person name="Nguyen M."/>
            <person name="Pham P.K."/>
            <person name="Cheuk R.F."/>
            <person name="Karlin-Newmann G."/>
            <person name="Liu S.X."/>
            <person name="Lam B."/>
            <person name="Sakano H."/>
            <person name="Wu T."/>
            <person name="Yu G."/>
            <person name="Miranda M."/>
            <person name="Quach H.L."/>
            <person name="Tripp M."/>
            <person name="Chang C.H."/>
            <person name="Lee J.M."/>
            <person name="Toriumi M.J."/>
            <person name="Chan M.M."/>
            <person name="Tang C.C."/>
            <person name="Onodera C.S."/>
            <person name="Deng J.M."/>
            <person name="Akiyama K."/>
            <person name="Ansari Y."/>
            <person name="Arakawa T."/>
            <person name="Banh J."/>
            <person name="Banno F."/>
            <person name="Bowser L."/>
            <person name="Brooks S.Y."/>
            <person name="Carninci P."/>
            <person name="Chao Q."/>
            <person name="Choy N."/>
            <person name="Enju A."/>
            <person name="Goldsmith A.D."/>
            <person name="Gurjal M."/>
            <person name="Hansen N.F."/>
            <person name="Hayashizaki Y."/>
            <person name="Johnson-Hopson C."/>
            <person name="Hsuan V.W."/>
            <person name="Iida K."/>
            <person name="Karnes M."/>
            <person name="Khan S."/>
            <person name="Koesema E."/>
            <person name="Ishida J."/>
            <person name="Jiang P.X."/>
            <person name="Jones T."/>
            <person name="Kawai J."/>
            <person name="Kamiya A."/>
            <person name="Meyers C."/>
            <person name="Nakajima M."/>
            <person name="Narusaka M."/>
            <person name="Seki M."/>
            <person name="Sakurai T."/>
            <person name="Satou M."/>
            <person name="Tamse R."/>
            <person name="Vaysberg M."/>
            <person name="Wallender E.K."/>
            <person name="Wong C."/>
            <person name="Yamamura Y."/>
            <person name="Yuan S."/>
            <person name="Shinozaki K."/>
            <person name="Davis R.W."/>
            <person name="Theologis A."/>
            <person name="Ecker J.R."/>
        </authorList>
    </citation>
    <scope>NUCLEOTIDE SEQUENCE [LARGE SCALE MRNA]</scope>
    <source>
        <strain>cv. Columbia</strain>
    </source>
</reference>
<reference key="6">
    <citation type="submission" date="2002-03" db="EMBL/GenBank/DDBJ databases">
        <title>Full-length cDNA from Arabidopsis thaliana.</title>
        <authorList>
            <person name="Brover V.V."/>
            <person name="Troukhan M.E."/>
            <person name="Alexandrov N.A."/>
            <person name="Lu Y.-P."/>
            <person name="Flavell R.B."/>
            <person name="Feldmann K.A."/>
        </authorList>
    </citation>
    <scope>NUCLEOTIDE SEQUENCE [LARGE SCALE MRNA]</scope>
</reference>
<reference key="7">
    <citation type="journal article" date="2001" name="Cell Stress Chaperones">
        <title>The J-domain proteins of Arabidopsis thaliana: an unexpectedly large and diverse family of chaperones.</title>
        <authorList>
            <person name="Miernyk J.A."/>
        </authorList>
    </citation>
    <scope>GENE FAMILY</scope>
    <scope>NOMENCLATURE</scope>
</reference>
<reference key="8">
    <citation type="journal article" date="2009" name="J. Proteomics">
        <title>Phosphoproteomic analysis of nuclei-enriched fractions from Arabidopsis thaliana.</title>
        <authorList>
            <person name="Jones A.M.E."/>
            <person name="MacLean D."/>
            <person name="Studholme D.J."/>
            <person name="Serna-Sanz A."/>
            <person name="Andreasson E."/>
            <person name="Rathjen J.P."/>
            <person name="Peck S.C."/>
        </authorList>
    </citation>
    <scope>IDENTIFICATION BY MASS SPECTROMETRY [LARGE SCALE ANALYSIS]</scope>
    <source>
        <strain>cv. Columbia</strain>
    </source>
</reference>
<name>DNAJ3_ARATH</name>
<comment type="function">
    <text evidence="1">Plays a continuous role in plant development probably in the structural organization of compartments.</text>
</comment>
<comment type="cofactor">
    <cofactor evidence="1">
        <name>Zn(2+)</name>
        <dbReference type="ChEBI" id="CHEBI:29105"/>
    </cofactor>
    <text evidence="1">Binds 2 Zn(2+) ions per monomer.</text>
</comment>
<comment type="subunit">
    <text evidence="1">Homodimer.</text>
</comment>
<comment type="interaction">
    <interactant intactId="EBI-1999282">
        <id>Q94AW8</id>
    </interactant>
    <interactant intactId="EBI-25519488">
        <id>Q9SZU7</id>
        <label>KAI2</label>
    </interactant>
    <organismsDiffer>false</organismsDiffer>
    <experiments>3</experiments>
</comment>
<comment type="subcellular location">
    <subcellularLocation>
        <location evidence="4">Membrane</location>
        <topology evidence="4">Lipid-anchor</topology>
    </subcellularLocation>
</comment>
<comment type="alternative products">
    <event type="alternative splicing"/>
    <isoform>
        <id>Q94AW8-1</id>
        <name>1</name>
        <sequence type="displayed"/>
    </isoform>
    <text>A number of isoforms are produced. According to EST sequences.</text>
</comment>
<comment type="tissue specificity">
    <text evidence="3">Roots, shoots, flowers, siliques and cotyledons.</text>
</comment>
<comment type="induction">
    <text evidence="3">A heat shock at 35 degrees Celsius for 5 hours resulted in a 5-fold increase in levels.</text>
</comment>
<comment type="PTM">
    <text evidence="1">Farnesylated.</text>
</comment>
<comment type="similarity">
    <text evidence="4">Belongs to the DnaJ family. A/I subfamily.</text>
</comment>
<proteinExistence type="evidence at protein level"/>
<keyword id="KW-0025">Alternative splicing</keyword>
<keyword id="KW-0143">Chaperone</keyword>
<keyword id="KW-0449">Lipoprotein</keyword>
<keyword id="KW-0472">Membrane</keyword>
<keyword id="KW-0479">Metal-binding</keyword>
<keyword id="KW-0488">Methylation</keyword>
<keyword id="KW-0636">Prenylation</keyword>
<keyword id="KW-1185">Reference proteome</keyword>
<keyword id="KW-0677">Repeat</keyword>
<keyword id="KW-0862">Zinc</keyword>
<keyword id="KW-0863">Zinc-finger</keyword>
<feature type="chain" id="PRO_0000071079" description="Chaperone protein dnaJ 3">
    <location>
        <begin position="1"/>
        <end position="417"/>
    </location>
</feature>
<feature type="propeptide" id="PRO_0000396765" description="Removed in mature form" evidence="1">
    <location>
        <begin position="418"/>
        <end position="420"/>
    </location>
</feature>
<feature type="domain" description="J">
    <location>
        <begin position="14"/>
        <end position="75"/>
    </location>
</feature>
<feature type="repeat" description="CXXCXGXG motif">
    <location>
        <begin position="148"/>
        <end position="155"/>
    </location>
</feature>
<feature type="repeat" description="CXXCXGXG motif">
    <location>
        <begin position="164"/>
        <end position="171"/>
    </location>
</feature>
<feature type="repeat" description="CXXCXGXG motif">
    <location>
        <begin position="191"/>
        <end position="198"/>
    </location>
</feature>
<feature type="repeat" description="CXXCXGXG motif">
    <location>
        <begin position="207"/>
        <end position="214"/>
    </location>
</feature>
<feature type="zinc finger region" description="CR-type">
    <location>
        <begin position="135"/>
        <end position="219"/>
    </location>
</feature>
<feature type="region of interest" description="Disordered" evidence="2">
    <location>
        <begin position="376"/>
        <end position="420"/>
    </location>
</feature>
<feature type="compositionally biased region" description="Basic and acidic residues" evidence="2">
    <location>
        <begin position="377"/>
        <end position="390"/>
    </location>
</feature>
<feature type="binding site" evidence="1">
    <location>
        <position position="148"/>
    </location>
    <ligand>
        <name>Zn(2+)</name>
        <dbReference type="ChEBI" id="CHEBI:29105"/>
        <label>1</label>
    </ligand>
</feature>
<feature type="binding site" evidence="1">
    <location>
        <position position="151"/>
    </location>
    <ligand>
        <name>Zn(2+)</name>
        <dbReference type="ChEBI" id="CHEBI:29105"/>
        <label>1</label>
    </ligand>
</feature>
<feature type="binding site" evidence="1">
    <location>
        <position position="164"/>
    </location>
    <ligand>
        <name>Zn(2+)</name>
        <dbReference type="ChEBI" id="CHEBI:29105"/>
        <label>2</label>
    </ligand>
</feature>
<feature type="binding site" evidence="1">
    <location>
        <position position="167"/>
    </location>
    <ligand>
        <name>Zn(2+)</name>
        <dbReference type="ChEBI" id="CHEBI:29105"/>
        <label>2</label>
    </ligand>
</feature>
<feature type="binding site" evidence="1">
    <location>
        <position position="191"/>
    </location>
    <ligand>
        <name>Zn(2+)</name>
        <dbReference type="ChEBI" id="CHEBI:29105"/>
        <label>2</label>
    </ligand>
</feature>
<feature type="binding site" evidence="1">
    <location>
        <position position="194"/>
    </location>
    <ligand>
        <name>Zn(2+)</name>
        <dbReference type="ChEBI" id="CHEBI:29105"/>
        <label>2</label>
    </ligand>
</feature>
<feature type="binding site" evidence="1">
    <location>
        <position position="207"/>
    </location>
    <ligand>
        <name>Zn(2+)</name>
        <dbReference type="ChEBI" id="CHEBI:29105"/>
        <label>1</label>
    </ligand>
</feature>
<feature type="binding site" evidence="1">
    <location>
        <position position="210"/>
    </location>
    <ligand>
        <name>Zn(2+)</name>
        <dbReference type="ChEBI" id="CHEBI:29105"/>
        <label>1</label>
    </ligand>
</feature>
<feature type="modified residue" description="Cysteine methyl ester" evidence="1">
    <location>
        <position position="417"/>
    </location>
</feature>
<feature type="lipid moiety-binding region" description="S-farnesyl cysteine" evidence="1">
    <location>
        <position position="417"/>
    </location>
</feature>
<feature type="sequence conflict" description="In Ref. 5; AAK74013." evidence="4" ref="5">
    <original>E</original>
    <variation>K</variation>
    <location>
        <position position="227"/>
    </location>
</feature>
<feature type="sequence conflict" description="In Ref. 1; AAB49030." evidence="4" ref="1">
    <original>K</original>
    <variation>Q</variation>
    <location>
        <position position="264"/>
    </location>
</feature>